<organism>
    <name type="scientific">Caenorhabditis elegans</name>
    <dbReference type="NCBI Taxonomy" id="6239"/>
    <lineage>
        <taxon>Eukaryota</taxon>
        <taxon>Metazoa</taxon>
        <taxon>Ecdysozoa</taxon>
        <taxon>Nematoda</taxon>
        <taxon>Chromadorea</taxon>
        <taxon>Rhabditida</taxon>
        <taxon>Rhabditina</taxon>
        <taxon>Rhabditomorpha</taxon>
        <taxon>Rhabditoidea</taxon>
        <taxon>Rhabditidae</taxon>
        <taxon>Peloderinae</taxon>
        <taxon>Caenorhabditis</taxon>
    </lineage>
</organism>
<feature type="chain" id="PRO_0000156058" description="Translation initiation factor eIF2B subunit alpha">
    <location>
        <begin position="1"/>
        <end position="305"/>
    </location>
</feature>
<keyword id="KW-0963">Cytoplasm</keyword>
<keyword id="KW-0396">Initiation factor</keyword>
<keyword id="KW-0648">Protein biosynthesis</keyword>
<keyword id="KW-1185">Reference proteome</keyword>
<protein>
    <recommendedName>
        <fullName>Translation initiation factor eIF2B subunit alpha</fullName>
    </recommendedName>
    <alternativeName>
        <fullName>eIF2B GDP-GTP exchange factor subunit alpha</fullName>
    </alternativeName>
</protein>
<dbReference type="EMBL" id="Z22176">
    <property type="protein sequence ID" value="CAA80132.1"/>
    <property type="molecule type" value="Genomic_DNA"/>
</dbReference>
<dbReference type="PIR" id="S40927">
    <property type="entry name" value="S40927"/>
</dbReference>
<dbReference type="SMR" id="P34604"/>
<dbReference type="BioGRID" id="41543">
    <property type="interactions" value="32"/>
</dbReference>
<dbReference type="DIP" id="DIP-26550N"/>
<dbReference type="FunCoup" id="P34604">
    <property type="interactions" value="3313"/>
</dbReference>
<dbReference type="IntAct" id="P34604">
    <property type="interactions" value="20"/>
</dbReference>
<dbReference type="STRING" id="6239.ZK1098.4.1"/>
<dbReference type="PaxDb" id="6239-ZK1098.4"/>
<dbReference type="PeptideAtlas" id="P34604"/>
<dbReference type="EnsemblMetazoa" id="ZK1098.4.1">
    <property type="protein sequence ID" value="ZK1098.4.1"/>
    <property type="gene ID" value="WBGene00014221"/>
</dbReference>
<dbReference type="KEGG" id="cel:CELE_ZK1098.4"/>
<dbReference type="UCSC" id="ZK1098.4">
    <property type="organism name" value="c. elegans"/>
</dbReference>
<dbReference type="AGR" id="WB:WBGene00014221"/>
<dbReference type="CTD" id="176348"/>
<dbReference type="WormBase" id="ZK1098.4">
    <property type="protein sequence ID" value="CE00367"/>
    <property type="gene ID" value="WBGene00014221"/>
</dbReference>
<dbReference type="eggNOG" id="KOG1466">
    <property type="taxonomic scope" value="Eukaryota"/>
</dbReference>
<dbReference type="GeneTree" id="ENSGT00550000074853"/>
<dbReference type="HOGENOM" id="CLU_016218_0_2_1"/>
<dbReference type="InParanoid" id="P34604"/>
<dbReference type="OMA" id="GDWESCK"/>
<dbReference type="OrthoDB" id="10249309at2759"/>
<dbReference type="PhylomeDB" id="P34604"/>
<dbReference type="Reactome" id="R-CEL-72731">
    <property type="pathway name" value="Recycling of eIF2:GDP"/>
</dbReference>
<dbReference type="PRO" id="PR:P34604"/>
<dbReference type="Proteomes" id="UP000001940">
    <property type="component" value="Chromosome III"/>
</dbReference>
<dbReference type="Bgee" id="WBGene00014221">
    <property type="expression patterns" value="Expressed in germ line (C elegans) and 4 other cell types or tissues"/>
</dbReference>
<dbReference type="GO" id="GO:0005829">
    <property type="term" value="C:cytosol"/>
    <property type="evidence" value="ECO:0007669"/>
    <property type="project" value="UniProtKB-SubCell"/>
</dbReference>
<dbReference type="GO" id="GO:0005851">
    <property type="term" value="C:eukaryotic translation initiation factor 2B complex"/>
    <property type="evidence" value="ECO:0000250"/>
    <property type="project" value="UniProtKB"/>
</dbReference>
<dbReference type="GO" id="GO:0005085">
    <property type="term" value="F:guanyl-nucleotide exchange factor activity"/>
    <property type="evidence" value="ECO:0000250"/>
    <property type="project" value="UniProtKB"/>
</dbReference>
<dbReference type="GO" id="GO:0042802">
    <property type="term" value="F:identical protein binding"/>
    <property type="evidence" value="ECO:0000353"/>
    <property type="project" value="IntAct"/>
</dbReference>
<dbReference type="GO" id="GO:0003743">
    <property type="term" value="F:translation initiation factor activity"/>
    <property type="evidence" value="ECO:0007669"/>
    <property type="project" value="UniProtKB-KW"/>
</dbReference>
<dbReference type="GO" id="GO:0002183">
    <property type="term" value="P:cytoplasmic translational initiation"/>
    <property type="evidence" value="ECO:0000250"/>
    <property type="project" value="UniProtKB"/>
</dbReference>
<dbReference type="GO" id="GO:0006413">
    <property type="term" value="P:translational initiation"/>
    <property type="evidence" value="ECO:0000318"/>
    <property type="project" value="GO_Central"/>
</dbReference>
<dbReference type="FunFam" id="1.20.120.1070:FF:000007">
    <property type="entry name" value="Probable translation initiation factor eIF-2B subunit alpha"/>
    <property type="match status" value="1"/>
</dbReference>
<dbReference type="FunFam" id="3.40.50.10470:FF:000031">
    <property type="entry name" value="Probable translation initiation factor eIF-2B subunit alpha"/>
    <property type="match status" value="1"/>
</dbReference>
<dbReference type="Gene3D" id="3.40.50.10470">
    <property type="entry name" value="Translation initiation factor eif-2b, domain 2"/>
    <property type="match status" value="1"/>
</dbReference>
<dbReference type="Gene3D" id="1.20.120.1070">
    <property type="entry name" value="Translation initiation factor eIF-2B, N-terminal domain"/>
    <property type="match status" value="1"/>
</dbReference>
<dbReference type="InterPro" id="IPR051501">
    <property type="entry name" value="eIF2B_alpha/beta/delta"/>
</dbReference>
<dbReference type="InterPro" id="IPR042528">
    <property type="entry name" value="elF-2B_alpha_N"/>
</dbReference>
<dbReference type="InterPro" id="IPR000649">
    <property type="entry name" value="IF-2B-related"/>
</dbReference>
<dbReference type="InterPro" id="IPR042529">
    <property type="entry name" value="IF_2B-like_C"/>
</dbReference>
<dbReference type="InterPro" id="IPR037171">
    <property type="entry name" value="NagB/RpiA_transferase-like"/>
</dbReference>
<dbReference type="PANTHER" id="PTHR45860">
    <property type="entry name" value="TRANSLATION INITIATION FACTOR EIF-2B SUBUNIT ALPHA"/>
    <property type="match status" value="1"/>
</dbReference>
<dbReference type="PANTHER" id="PTHR45860:SF1">
    <property type="entry name" value="TRANSLATION INITIATION FACTOR EIF-2B SUBUNIT ALPHA"/>
    <property type="match status" value="1"/>
</dbReference>
<dbReference type="Pfam" id="PF01008">
    <property type="entry name" value="IF-2B"/>
    <property type="match status" value="1"/>
</dbReference>
<dbReference type="SUPFAM" id="SSF100950">
    <property type="entry name" value="NagB/RpiA/CoA transferase-like"/>
    <property type="match status" value="1"/>
</dbReference>
<reference key="1">
    <citation type="journal article" date="1994" name="Nature">
        <title>2.2 Mb of contiguous nucleotide sequence from chromosome III of C. elegans.</title>
        <authorList>
            <person name="Wilson R."/>
            <person name="Ainscough R."/>
            <person name="Anderson K."/>
            <person name="Baynes C."/>
            <person name="Berks M."/>
            <person name="Bonfield J."/>
            <person name="Burton J."/>
            <person name="Connell M."/>
            <person name="Copsey T."/>
            <person name="Cooper J."/>
            <person name="Coulson A."/>
            <person name="Craxton M."/>
            <person name="Dear S."/>
            <person name="Du Z."/>
            <person name="Durbin R."/>
            <person name="Favello A."/>
            <person name="Fraser A."/>
            <person name="Fulton L."/>
            <person name="Gardner A."/>
            <person name="Green P."/>
            <person name="Hawkins T."/>
            <person name="Hillier L."/>
            <person name="Jier M."/>
            <person name="Johnston L."/>
            <person name="Jones M."/>
            <person name="Kershaw J."/>
            <person name="Kirsten J."/>
            <person name="Laisster N."/>
            <person name="Latreille P."/>
            <person name="Lightning J."/>
            <person name="Lloyd C."/>
            <person name="Mortimore B."/>
            <person name="O'Callaghan M."/>
            <person name="Parsons J."/>
            <person name="Percy C."/>
            <person name="Rifken L."/>
            <person name="Roopra A."/>
            <person name="Saunders D."/>
            <person name="Shownkeen R."/>
            <person name="Sims M."/>
            <person name="Smaldon N."/>
            <person name="Smith A."/>
            <person name="Smith M."/>
            <person name="Sonnhammer E."/>
            <person name="Staden R."/>
            <person name="Sulston J."/>
            <person name="Thierry-Mieg J."/>
            <person name="Thomas K."/>
            <person name="Vaudin M."/>
            <person name="Vaughan K."/>
            <person name="Waterston R."/>
            <person name="Watson A."/>
            <person name="Weinstock L."/>
            <person name="Wilkinson-Sproat J."/>
            <person name="Wohldman P."/>
        </authorList>
    </citation>
    <scope>NUCLEOTIDE SEQUENCE [LARGE SCALE GENOMIC DNA]</scope>
    <source>
        <strain>Bristol N2</strain>
    </source>
</reference>
<reference key="2">
    <citation type="journal article" date="1998" name="Science">
        <title>Genome sequence of the nematode C. elegans: a platform for investigating biology.</title>
        <authorList>
            <consortium name="The C. elegans sequencing consortium"/>
        </authorList>
    </citation>
    <scope>NUCLEOTIDE SEQUENCE [LARGE SCALE GENOMIC DNA]</scope>
    <source>
        <strain>Bristol N2</strain>
    </source>
</reference>
<sequence length="305" mass="34117">MVQESIISSFRGKLENDPSKSTSLATVETLLEVLDRSRATTVAEFQNELNQVVAALEKTDYSSTSIRSAADLFTRFTSLAPAALLDQEDFSQVLDLYRQRARSFIKNVRGSRAKISKCARLFFTHHMNILTHSYSKVVLETILDAHKSGYHLHVWVTESQPDASGKLVFEELKKNGVPTTLVLDSCVGYVMERIQAVLVGAEGVMETGGIINKIGTVNVCIIAKSRHVPVYVCAETIKFVREFPLNQADIPQEFKYRTSVIERNNLELEHPDVDYTAPEFLTLIITDVGAMKPEAVGEELIKMYI</sequence>
<name>EI2BA_CAEEL</name>
<gene>
    <name type="ORF">ZK1098.4</name>
</gene>
<comment type="function">
    <text evidence="1">Acts as a component of the translation initiation factor 2B (eIF2B) complex, which catalyzes the exchange of GDP for GTP on eukaryotic initiation factor 2 (eIF2) gamma subunit. Its guanine nucleotide exchange factor activity is repressed when bound to eIF2 complex phosphorylated on the alpha subunit, thereby limiting the amount of methionyl-initiator methionine tRNA available to the ribosome and consequently global translation is repressed.</text>
</comment>
<comment type="subunit">
    <text evidence="1">Component of the translation initiation factor 2B (eIF2B) complex which is a heterodecamer of two sets of five different subunits: alpha, beta, gamma, delta and epsilon. Subunits alpha, beta and delta comprise a regulatory subcomplex and subunits epsilon and gamma comprise a catalytic subcomplex. Within the complex, the hexameric regulatory complex resides at the center, with the two heterodimeric catalytic subcomplexes bound on opposite sides.</text>
</comment>
<comment type="interaction">
    <interactant intactId="EBI-313831">
        <id>P34604</id>
    </interactant>
    <interactant intactId="EBI-313831">
        <id>P34604</id>
        <label>ZK1098.4</label>
    </interactant>
    <organismsDiffer>false</organismsDiffer>
    <experiments>3</experiments>
</comment>
<comment type="subcellular location">
    <subcellularLocation>
        <location evidence="2">Cytoplasm</location>
        <location evidence="2">Cytosol</location>
    </subcellularLocation>
</comment>
<comment type="similarity">
    <text evidence="3">Belongs to the eIF-2B alpha/beta/delta subunits family.</text>
</comment>
<proteinExistence type="evidence at protein level"/>
<evidence type="ECO:0000250" key="1">
    <source>
        <dbReference type="UniProtKB" id="Q14232"/>
    </source>
</evidence>
<evidence type="ECO:0000250" key="2">
    <source>
        <dbReference type="UniProtKB" id="Q9USP0"/>
    </source>
</evidence>
<evidence type="ECO:0000305" key="3"/>
<accession>P34604</accession>